<accession>Q1IX90</accession>
<reference key="1">
    <citation type="submission" date="2006-04" db="EMBL/GenBank/DDBJ databases">
        <title>Complete sequence of chromosome of Deinococcus geothermalis DSM 11300.</title>
        <authorList>
            <person name="Copeland A."/>
            <person name="Lucas S."/>
            <person name="Lapidus A."/>
            <person name="Barry K."/>
            <person name="Detter J.C."/>
            <person name="Glavina del Rio T."/>
            <person name="Hammon N."/>
            <person name="Israni S."/>
            <person name="Dalin E."/>
            <person name="Tice H."/>
            <person name="Pitluck S."/>
            <person name="Brettin T."/>
            <person name="Bruce D."/>
            <person name="Han C."/>
            <person name="Tapia R."/>
            <person name="Saunders E."/>
            <person name="Gilna P."/>
            <person name="Schmutz J."/>
            <person name="Larimer F."/>
            <person name="Land M."/>
            <person name="Hauser L."/>
            <person name="Kyrpides N."/>
            <person name="Kim E."/>
            <person name="Daly M.J."/>
            <person name="Fredrickson J.K."/>
            <person name="Makarova K.S."/>
            <person name="Gaidamakova E.K."/>
            <person name="Zhai M."/>
            <person name="Richardson P."/>
        </authorList>
    </citation>
    <scope>NUCLEOTIDE SEQUENCE [LARGE SCALE GENOMIC DNA]</scope>
    <source>
        <strain>DSM 11300 / CIP 105573 / AG-3a</strain>
    </source>
</reference>
<dbReference type="EMBL" id="CP000359">
    <property type="protein sequence ID" value="ABF46144.1"/>
    <property type="status" value="ALT_INIT"/>
    <property type="molecule type" value="Genomic_DNA"/>
</dbReference>
<dbReference type="SMR" id="Q1IX90"/>
<dbReference type="STRING" id="319795.Dgeo_1849"/>
<dbReference type="KEGG" id="dge:Dgeo_1849"/>
<dbReference type="eggNOG" id="COG1841">
    <property type="taxonomic scope" value="Bacteria"/>
</dbReference>
<dbReference type="HOGENOM" id="CLU_131047_2_1_0"/>
<dbReference type="Proteomes" id="UP000002431">
    <property type="component" value="Chromosome"/>
</dbReference>
<dbReference type="GO" id="GO:0022625">
    <property type="term" value="C:cytosolic large ribosomal subunit"/>
    <property type="evidence" value="ECO:0007669"/>
    <property type="project" value="TreeGrafter"/>
</dbReference>
<dbReference type="GO" id="GO:0003735">
    <property type="term" value="F:structural constituent of ribosome"/>
    <property type="evidence" value="ECO:0007669"/>
    <property type="project" value="InterPro"/>
</dbReference>
<dbReference type="GO" id="GO:0006412">
    <property type="term" value="P:translation"/>
    <property type="evidence" value="ECO:0007669"/>
    <property type="project" value="UniProtKB-UniRule"/>
</dbReference>
<dbReference type="CDD" id="cd01658">
    <property type="entry name" value="Ribosomal_L30"/>
    <property type="match status" value="1"/>
</dbReference>
<dbReference type="Gene3D" id="3.30.1390.20">
    <property type="entry name" value="Ribosomal protein L30, ferredoxin-like fold domain"/>
    <property type="match status" value="1"/>
</dbReference>
<dbReference type="HAMAP" id="MF_01371_B">
    <property type="entry name" value="Ribosomal_uL30_B"/>
    <property type="match status" value="1"/>
</dbReference>
<dbReference type="InterPro" id="IPR036919">
    <property type="entry name" value="Ribo_uL30_ferredoxin-like_sf"/>
</dbReference>
<dbReference type="InterPro" id="IPR005996">
    <property type="entry name" value="Ribosomal_uL30_bac-type"/>
</dbReference>
<dbReference type="InterPro" id="IPR016082">
    <property type="entry name" value="Ribosomal_uL30_ferredoxin-like"/>
</dbReference>
<dbReference type="NCBIfam" id="TIGR01308">
    <property type="entry name" value="rpmD_bact"/>
    <property type="match status" value="1"/>
</dbReference>
<dbReference type="PANTHER" id="PTHR15892:SF2">
    <property type="entry name" value="LARGE RIBOSOMAL SUBUNIT PROTEIN UL30M"/>
    <property type="match status" value="1"/>
</dbReference>
<dbReference type="PANTHER" id="PTHR15892">
    <property type="entry name" value="MITOCHONDRIAL RIBOSOMAL PROTEIN L30"/>
    <property type="match status" value="1"/>
</dbReference>
<dbReference type="Pfam" id="PF00327">
    <property type="entry name" value="Ribosomal_L30"/>
    <property type="match status" value="1"/>
</dbReference>
<dbReference type="PIRSF" id="PIRSF002211">
    <property type="entry name" value="Ribosomal_L30_bac-type"/>
    <property type="match status" value="1"/>
</dbReference>
<dbReference type="SUPFAM" id="SSF55129">
    <property type="entry name" value="Ribosomal protein L30p/L7e"/>
    <property type="match status" value="1"/>
</dbReference>
<sequence>MTLKRSVIGRPKNQVETVKALGLKKIGDSRELADTPAIRGMIKTVQHLVEVEA</sequence>
<protein>
    <recommendedName>
        <fullName evidence="1">Large ribosomal subunit protein uL30</fullName>
    </recommendedName>
    <alternativeName>
        <fullName evidence="2">50S ribosomal protein L30</fullName>
    </alternativeName>
</protein>
<evidence type="ECO:0000255" key="1">
    <source>
        <dbReference type="HAMAP-Rule" id="MF_01371"/>
    </source>
</evidence>
<evidence type="ECO:0000305" key="2"/>
<keyword id="KW-0687">Ribonucleoprotein</keyword>
<keyword id="KW-0689">Ribosomal protein</keyword>
<gene>
    <name evidence="1" type="primary">rpmD</name>
    <name type="ordered locus">Dgeo_1849</name>
</gene>
<name>RL30_DEIGD</name>
<feature type="chain" id="PRO_0000273779" description="Large ribosomal subunit protein uL30">
    <location>
        <begin position="1"/>
        <end position="53"/>
    </location>
</feature>
<comment type="subunit">
    <text evidence="1">Part of the 50S ribosomal subunit.</text>
</comment>
<comment type="similarity">
    <text evidence="1">Belongs to the universal ribosomal protein uL30 family.</text>
</comment>
<comment type="sequence caution" evidence="2">
    <conflict type="erroneous initiation">
        <sequence resource="EMBL-CDS" id="ABF46144"/>
    </conflict>
</comment>
<organism>
    <name type="scientific">Deinococcus geothermalis (strain DSM 11300 / CIP 105573 / AG-3a)</name>
    <dbReference type="NCBI Taxonomy" id="319795"/>
    <lineage>
        <taxon>Bacteria</taxon>
        <taxon>Thermotogati</taxon>
        <taxon>Deinococcota</taxon>
        <taxon>Deinococci</taxon>
        <taxon>Deinococcales</taxon>
        <taxon>Deinococcaceae</taxon>
        <taxon>Deinococcus</taxon>
    </lineage>
</organism>
<proteinExistence type="inferred from homology"/>